<keyword id="KW-0460">Magnesium</keyword>
<keyword id="KW-0464">Manganese</keyword>
<keyword id="KW-0474">Menaquinone biosynthesis</keyword>
<keyword id="KW-0479">Metal-binding</keyword>
<keyword id="KW-1185">Reference proteome</keyword>
<keyword id="KW-0786">Thiamine pyrophosphate</keyword>
<keyword id="KW-0808">Transferase</keyword>
<dbReference type="EC" id="2.2.1.9" evidence="1"/>
<dbReference type="EMBL" id="CP000569">
    <property type="protein sequence ID" value="ABN74834.1"/>
    <property type="molecule type" value="Genomic_DNA"/>
</dbReference>
<dbReference type="RefSeq" id="WP_009875393.1">
    <property type="nucleotide sequence ID" value="NC_009053.1"/>
</dbReference>
<dbReference type="SMR" id="A3N348"/>
<dbReference type="STRING" id="416269.APL_1750"/>
<dbReference type="EnsemblBacteria" id="ABN74834">
    <property type="protein sequence ID" value="ABN74834"/>
    <property type="gene ID" value="APL_1750"/>
</dbReference>
<dbReference type="KEGG" id="apl:APL_1750"/>
<dbReference type="PATRIC" id="fig|416269.6.peg.1819"/>
<dbReference type="eggNOG" id="COG1165">
    <property type="taxonomic scope" value="Bacteria"/>
</dbReference>
<dbReference type="HOGENOM" id="CLU_006051_3_0_6"/>
<dbReference type="UniPathway" id="UPA00079"/>
<dbReference type="UniPathway" id="UPA01057">
    <property type="reaction ID" value="UER00164"/>
</dbReference>
<dbReference type="Proteomes" id="UP000001432">
    <property type="component" value="Chromosome"/>
</dbReference>
<dbReference type="GO" id="GO:0070204">
    <property type="term" value="F:2-succinyl-5-enolpyruvyl-6-hydroxy-3-cyclohexene-1-carboxylic-acid synthase activity"/>
    <property type="evidence" value="ECO:0007669"/>
    <property type="project" value="UniProtKB-UniRule"/>
</dbReference>
<dbReference type="GO" id="GO:0000287">
    <property type="term" value="F:magnesium ion binding"/>
    <property type="evidence" value="ECO:0007669"/>
    <property type="project" value="UniProtKB-UniRule"/>
</dbReference>
<dbReference type="GO" id="GO:0030145">
    <property type="term" value="F:manganese ion binding"/>
    <property type="evidence" value="ECO:0007669"/>
    <property type="project" value="UniProtKB-UniRule"/>
</dbReference>
<dbReference type="GO" id="GO:0030976">
    <property type="term" value="F:thiamine pyrophosphate binding"/>
    <property type="evidence" value="ECO:0007669"/>
    <property type="project" value="UniProtKB-UniRule"/>
</dbReference>
<dbReference type="GO" id="GO:0009234">
    <property type="term" value="P:menaquinone biosynthetic process"/>
    <property type="evidence" value="ECO:0007669"/>
    <property type="project" value="UniProtKB-UniRule"/>
</dbReference>
<dbReference type="CDD" id="cd07037">
    <property type="entry name" value="TPP_PYR_MenD"/>
    <property type="match status" value="1"/>
</dbReference>
<dbReference type="CDD" id="cd02009">
    <property type="entry name" value="TPP_SHCHC_synthase"/>
    <property type="match status" value="1"/>
</dbReference>
<dbReference type="Gene3D" id="3.40.50.970">
    <property type="match status" value="2"/>
</dbReference>
<dbReference type="Gene3D" id="3.40.50.1220">
    <property type="entry name" value="TPP-binding domain"/>
    <property type="match status" value="1"/>
</dbReference>
<dbReference type="HAMAP" id="MF_01659">
    <property type="entry name" value="MenD"/>
    <property type="match status" value="1"/>
</dbReference>
<dbReference type="InterPro" id="IPR004433">
    <property type="entry name" value="MenaQ_synth_MenD"/>
</dbReference>
<dbReference type="InterPro" id="IPR032264">
    <property type="entry name" value="MenD_middle"/>
</dbReference>
<dbReference type="InterPro" id="IPR029061">
    <property type="entry name" value="THDP-binding"/>
</dbReference>
<dbReference type="InterPro" id="IPR012001">
    <property type="entry name" value="Thiamin_PyroP_enz_TPP-bd_dom"/>
</dbReference>
<dbReference type="InterPro" id="IPR011766">
    <property type="entry name" value="TPP_enzyme_TPP-bd"/>
</dbReference>
<dbReference type="NCBIfam" id="TIGR00173">
    <property type="entry name" value="menD"/>
    <property type="match status" value="1"/>
</dbReference>
<dbReference type="PANTHER" id="PTHR42916">
    <property type="entry name" value="2-SUCCINYL-5-ENOLPYRUVYL-6-HYDROXY-3-CYCLOHEXENE-1-CARBOXYLATE SYNTHASE"/>
    <property type="match status" value="1"/>
</dbReference>
<dbReference type="PANTHER" id="PTHR42916:SF1">
    <property type="entry name" value="PROTEIN PHYLLO, CHLOROPLASTIC"/>
    <property type="match status" value="1"/>
</dbReference>
<dbReference type="Pfam" id="PF02775">
    <property type="entry name" value="TPP_enzyme_C"/>
    <property type="match status" value="1"/>
</dbReference>
<dbReference type="Pfam" id="PF16582">
    <property type="entry name" value="TPP_enzyme_M_2"/>
    <property type="match status" value="1"/>
</dbReference>
<dbReference type="Pfam" id="PF02776">
    <property type="entry name" value="TPP_enzyme_N"/>
    <property type="match status" value="1"/>
</dbReference>
<dbReference type="PIRSF" id="PIRSF004983">
    <property type="entry name" value="MenD"/>
    <property type="match status" value="1"/>
</dbReference>
<dbReference type="SUPFAM" id="SSF52518">
    <property type="entry name" value="Thiamin diphosphate-binding fold (THDP-binding)"/>
    <property type="match status" value="2"/>
</dbReference>
<comment type="function">
    <text evidence="1">Catalyzes the thiamine diphosphate-dependent decarboxylation of 2-oxoglutarate and the subsequent addition of the resulting succinic semialdehyde-thiamine pyrophosphate anion to isochorismate to yield 2-succinyl-5-enolpyruvyl-6-hydroxy-3-cyclohexene-1-carboxylate (SEPHCHC).</text>
</comment>
<comment type="catalytic activity">
    <reaction evidence="1">
        <text>isochorismate + 2-oxoglutarate + H(+) = 5-enolpyruvoyl-6-hydroxy-2-succinyl-cyclohex-3-ene-1-carboxylate + CO2</text>
        <dbReference type="Rhea" id="RHEA:25593"/>
        <dbReference type="ChEBI" id="CHEBI:15378"/>
        <dbReference type="ChEBI" id="CHEBI:16526"/>
        <dbReference type="ChEBI" id="CHEBI:16810"/>
        <dbReference type="ChEBI" id="CHEBI:29780"/>
        <dbReference type="ChEBI" id="CHEBI:58818"/>
        <dbReference type="EC" id="2.2.1.9"/>
    </reaction>
</comment>
<comment type="cofactor">
    <cofactor evidence="1">
        <name>Mg(2+)</name>
        <dbReference type="ChEBI" id="CHEBI:18420"/>
    </cofactor>
    <cofactor evidence="1">
        <name>Mn(2+)</name>
        <dbReference type="ChEBI" id="CHEBI:29035"/>
    </cofactor>
</comment>
<comment type="cofactor">
    <cofactor evidence="1">
        <name>thiamine diphosphate</name>
        <dbReference type="ChEBI" id="CHEBI:58937"/>
    </cofactor>
    <text evidence="1">Binds 1 thiamine pyrophosphate per subunit.</text>
</comment>
<comment type="pathway">
    <text evidence="1">Quinol/quinone metabolism; 1,4-dihydroxy-2-naphthoate biosynthesis; 1,4-dihydroxy-2-naphthoate from chorismate: step 2/7.</text>
</comment>
<comment type="pathway">
    <text evidence="1">Quinol/quinone metabolism; menaquinone biosynthesis.</text>
</comment>
<comment type="subunit">
    <text evidence="1">Homodimer.</text>
</comment>
<comment type="similarity">
    <text evidence="1">Belongs to the TPP enzyme family. MenD subfamily.</text>
</comment>
<accession>A3N348</accession>
<gene>
    <name evidence="1" type="primary">menD</name>
    <name type="ordered locus">APL_1750</name>
</gene>
<name>MEND_ACTP2</name>
<reference key="1">
    <citation type="journal article" date="2008" name="J. Bacteriol.">
        <title>The complete genome sequence of Actinobacillus pleuropneumoniae L20 (serotype 5b).</title>
        <authorList>
            <person name="Foote S.J."/>
            <person name="Bosse J.T."/>
            <person name="Bouevitch A.B."/>
            <person name="Langford P.R."/>
            <person name="Young N.M."/>
            <person name="Nash J.H.E."/>
        </authorList>
    </citation>
    <scope>NUCLEOTIDE SEQUENCE [LARGE SCALE GENOMIC DNA]</scope>
    <source>
        <strain>L20</strain>
    </source>
</reference>
<sequence>MTVSTFNRTWAKVIVNALLRYGVKHFCIAPGSRSTPLTLEALQLQQNQQAQCHSHFDERGLGFFALGIAKVTNDPVAIIVTSGTAVANLYPAIIEASLTHHKLIVLSADRPPELIGCGANQAIPQQGIFADYPIAGVNLPKPAEHYNAGWLVATIEQACVTQSQQGGVVHINAPFAEPLYEADENAINTHPWLKPIQSWLINPQTKWINSQTIQSEVSMHENWDYWRTKRGVIVVGKLPVEQGIGIKAWAETLGWCLITDVQSCVDANLPYADIWLSNNTVHQRLLQADIVIQFGGQIVSKRVNKFLEAFKGEFWQVDEYSDYLNPFAHHQTRFVAKAHHFLRVHPPLRQKPWLLEPLALSQFCAGFIEQQVGGSLNEASLAHHIEEVLATSGNLFIGNSLFVRLVDALCKLPEGYPVYTNRGASGIDGLIATMAGVAKGSGQPTVGVIGDISALHDLNSVSLLNKISHPCILFVINNSGGAIFDMLPVEAQAKEQFYRLSHNYEFAPIATMFGIEYIRPFTWADLKAKLKLAYGRKGVTIVEIKVNDQDGSNLYKSLVKQISQAEIA</sequence>
<protein>
    <recommendedName>
        <fullName evidence="1">2-succinyl-5-enolpyruvyl-6-hydroxy-3-cyclohexene-1-carboxylate synthase</fullName>
        <shortName evidence="1">SEPHCHC synthase</shortName>
        <ecNumber evidence="1">2.2.1.9</ecNumber>
    </recommendedName>
    <alternativeName>
        <fullName evidence="1">Menaquinone biosynthesis protein MenD</fullName>
    </alternativeName>
</protein>
<proteinExistence type="inferred from homology"/>
<feature type="chain" id="PRO_0000341695" description="2-succinyl-5-enolpyruvyl-6-hydroxy-3-cyclohexene-1-carboxylate synthase">
    <location>
        <begin position="1"/>
        <end position="568"/>
    </location>
</feature>
<evidence type="ECO:0000255" key="1">
    <source>
        <dbReference type="HAMAP-Rule" id="MF_01659"/>
    </source>
</evidence>
<organism>
    <name type="scientific">Actinobacillus pleuropneumoniae serotype 5b (strain L20)</name>
    <dbReference type="NCBI Taxonomy" id="416269"/>
    <lineage>
        <taxon>Bacteria</taxon>
        <taxon>Pseudomonadati</taxon>
        <taxon>Pseudomonadota</taxon>
        <taxon>Gammaproteobacteria</taxon>
        <taxon>Pasteurellales</taxon>
        <taxon>Pasteurellaceae</taxon>
        <taxon>Actinobacillus</taxon>
    </lineage>
</organism>